<proteinExistence type="evidence at protein level"/>
<protein>
    <recommendedName>
        <fullName evidence="1">Golgi to ER traffic protein 2</fullName>
    </recommendedName>
    <alternativeName>
        <fullName>Guided entry of tail-anchored proteins 2</fullName>
    </alternativeName>
    <alternativeName>
        <fullName evidence="1">Hydroxyurea resistance protein 2</fullName>
    </alternativeName>
    <alternativeName>
        <fullName evidence="1">Required for meiotic nuclear division protein 7</fullName>
    </alternativeName>
</protein>
<reference key="1">
    <citation type="journal article" date="1997" name="Nature">
        <title>The nucleotide sequence of Saccharomyces cerevisiae chromosome V.</title>
        <authorList>
            <person name="Dietrich F.S."/>
            <person name="Mulligan J.T."/>
            <person name="Hennessy K.M."/>
            <person name="Yelton M.A."/>
            <person name="Allen E."/>
            <person name="Araujo R."/>
            <person name="Aviles E."/>
            <person name="Berno A."/>
            <person name="Brennan T."/>
            <person name="Carpenter J."/>
            <person name="Chen E."/>
            <person name="Cherry J.M."/>
            <person name="Chung E."/>
            <person name="Duncan M."/>
            <person name="Guzman E."/>
            <person name="Hartzell G."/>
            <person name="Hunicke-Smith S."/>
            <person name="Hyman R.W."/>
            <person name="Kayser A."/>
            <person name="Komp C."/>
            <person name="Lashkari D."/>
            <person name="Lew H."/>
            <person name="Lin D."/>
            <person name="Mosedale D."/>
            <person name="Nakahara K."/>
            <person name="Namath A."/>
            <person name="Norgren R."/>
            <person name="Oefner P."/>
            <person name="Oh C."/>
            <person name="Petel F.X."/>
            <person name="Roberts D."/>
            <person name="Sehl P."/>
            <person name="Schramm S."/>
            <person name="Shogren T."/>
            <person name="Smith V."/>
            <person name="Taylor P."/>
            <person name="Wei Y."/>
            <person name="Botstein D."/>
            <person name="Davis R.W."/>
        </authorList>
    </citation>
    <scope>NUCLEOTIDE SEQUENCE [LARGE SCALE GENOMIC DNA]</scope>
    <source>
        <strain>ATCC 204508 / S288c</strain>
    </source>
</reference>
<reference key="2">
    <citation type="journal article" date="2014" name="G3 (Bethesda)">
        <title>The reference genome sequence of Saccharomyces cerevisiae: Then and now.</title>
        <authorList>
            <person name="Engel S.R."/>
            <person name="Dietrich F.S."/>
            <person name="Fisk D.G."/>
            <person name="Binkley G."/>
            <person name="Balakrishnan R."/>
            <person name="Costanzo M.C."/>
            <person name="Dwight S.S."/>
            <person name="Hitz B.C."/>
            <person name="Karra K."/>
            <person name="Nash R.S."/>
            <person name="Weng S."/>
            <person name="Wong E.D."/>
            <person name="Lloyd P."/>
            <person name="Skrzypek M.S."/>
            <person name="Miyasato S.R."/>
            <person name="Simison M."/>
            <person name="Cherry J.M."/>
        </authorList>
    </citation>
    <scope>GENOME REANNOTATION</scope>
    <source>
        <strain>ATCC 204508 / S288c</strain>
    </source>
</reference>
<reference key="3">
    <citation type="journal article" date="2000" name="Cell">
        <title>Functional discovery via a compendium of expression profiles.</title>
        <authorList>
            <person name="Hughes T.R."/>
            <person name="Marton M.J."/>
            <person name="Jones A.R."/>
            <person name="Roberts C.J."/>
            <person name="Stoughton R."/>
            <person name="Armour C.D."/>
            <person name="Bennett H.A."/>
            <person name="Coffey E."/>
            <person name="Dai H."/>
            <person name="He Y.D."/>
            <person name="Kidd M.J."/>
            <person name="King A.M."/>
            <person name="Meyer M.R."/>
            <person name="Slade D."/>
            <person name="Lum P.Y."/>
            <person name="Stepaniants S.B."/>
            <person name="Shoemaker D.D."/>
            <person name="Gachotte D."/>
            <person name="Chakraburtty K."/>
            <person name="Simon J."/>
            <person name="Bard M."/>
            <person name="Friend S.H."/>
        </authorList>
    </citation>
    <scope>FUNCTION</scope>
</reference>
<reference key="4">
    <citation type="journal article" date="2002" name="Nature">
        <title>Systematic identification of protein complexes in Saccharomyces cerevisiae by mass spectrometry.</title>
        <authorList>
            <person name="Ho Y."/>
            <person name="Gruhler A."/>
            <person name="Heilbut A."/>
            <person name="Bader G.D."/>
            <person name="Moore L."/>
            <person name="Adams S.-L."/>
            <person name="Millar A."/>
            <person name="Taylor P."/>
            <person name="Bennett K."/>
            <person name="Boutilier K."/>
            <person name="Yang L."/>
            <person name="Wolting C."/>
            <person name="Donaldson I."/>
            <person name="Schandorff S."/>
            <person name="Shewnarane J."/>
            <person name="Vo M."/>
            <person name="Taggart J."/>
            <person name="Goudreault M."/>
            <person name="Muskat B."/>
            <person name="Alfarano C."/>
            <person name="Dewar D."/>
            <person name="Lin Z."/>
            <person name="Michalickova K."/>
            <person name="Willems A.R."/>
            <person name="Sassi H."/>
            <person name="Nielsen P.A."/>
            <person name="Rasmussen K.J."/>
            <person name="Andersen J.R."/>
            <person name="Johansen L.E."/>
            <person name="Hansen L.H."/>
            <person name="Jespersen H."/>
            <person name="Podtelejnikov A."/>
            <person name="Nielsen E."/>
            <person name="Crawford J."/>
            <person name="Poulsen V."/>
            <person name="Soerensen B.D."/>
            <person name="Matthiesen J."/>
            <person name="Hendrickson R.C."/>
            <person name="Gleeson F."/>
            <person name="Pawson T."/>
            <person name="Moran M.F."/>
            <person name="Durocher D."/>
            <person name="Mann M."/>
            <person name="Hogue C.W.V."/>
            <person name="Figeys D."/>
            <person name="Tyers M."/>
        </authorList>
    </citation>
    <scope>IDENTIFICATION IN GET COMPLEX</scope>
    <scope>IDENTIFICATION BY MASS SPECTROMETRY</scope>
</reference>
<reference key="5">
    <citation type="journal article" date="2003" name="Genetics">
        <title>Large-scale functional genomic analysis of sporulation and meiosis in Saccharomyces cerevisiae.</title>
        <authorList>
            <person name="Enyenihi A.H."/>
            <person name="Saunders W.S."/>
        </authorList>
    </citation>
    <scope>FUNCTION</scope>
</reference>
<reference key="6">
    <citation type="journal article" date="2003" name="Nature">
        <title>Sequencing and comparison of yeast species to identify genes and regulatory elements.</title>
        <authorList>
            <person name="Kellis M."/>
            <person name="Patterson N."/>
            <person name="Endrizzi M."/>
            <person name="Birren B.W."/>
            <person name="Lander E.S."/>
        </authorList>
    </citation>
    <scope>IDENTIFICATION OF PROBABLE INITIATION SITE</scope>
</reference>
<reference key="7">
    <citation type="journal article" date="2003" name="Nature">
        <title>Global analysis of protein localization in budding yeast.</title>
        <authorList>
            <person name="Huh W.-K."/>
            <person name="Falvo J.V."/>
            <person name="Gerke L.C."/>
            <person name="Carroll A.S."/>
            <person name="Howson R.W."/>
            <person name="Weissman J.S."/>
            <person name="O'Shea E.K."/>
        </authorList>
    </citation>
    <scope>SUBCELLULAR LOCATION [LARGE SCALE ANALYSIS]</scope>
</reference>
<reference key="8">
    <citation type="journal article" date="2003" name="Proc. Natl. Acad. Sci. U.S.A.">
        <title>Novel functions of the phosphatidylinositol metabolic pathway discovered by a chemical genomics screen with wortmannin.</title>
        <authorList>
            <person name="Zewail A."/>
            <person name="Xie M.W."/>
            <person name="Xing Y."/>
            <person name="Lin L."/>
            <person name="Zhang P.F."/>
            <person name="Zou W."/>
            <person name="Saxe J.P."/>
            <person name="Huang J."/>
        </authorList>
    </citation>
    <scope>FUNCTION</scope>
</reference>
<reference key="9">
    <citation type="journal article" date="2005" name="Cell">
        <title>Exploration of the function and organization of the yeast early secretory pathway through an epistatic miniarray profile.</title>
        <authorList>
            <person name="Schuldiner M."/>
            <person name="Collins S.R."/>
            <person name="Thompson N.J."/>
            <person name="Denic V."/>
            <person name="Bhamidipati A."/>
            <person name="Punna T."/>
            <person name="Ihmels J."/>
            <person name="Andrews B."/>
            <person name="Boone C."/>
            <person name="Greenblatt J.F."/>
            <person name="Weissman J.S."/>
            <person name="Krogan N.J."/>
        </authorList>
    </citation>
    <scope>FUNCTION</scope>
    <scope>IDENTIFICATION IN GET COMPLEX</scope>
    <scope>SUBCELLULAR LOCATION</scope>
</reference>
<reference key="10">
    <citation type="journal article" date="2006" name="Genetics">
        <title>The conserved ATPase Get3/Arr4 modulates the activity of membrane-associated proteins in Saccharomyces cerevisiae.</title>
        <authorList>
            <person name="Auld K.L."/>
            <person name="Hitchcock A.L."/>
            <person name="Doherty H.K."/>
            <person name="Frietze S."/>
            <person name="Huang L.S."/>
            <person name="Silver P.A."/>
        </authorList>
    </citation>
    <scope>INTERACTION WITH GET3</scope>
</reference>
<reference key="11">
    <citation type="journal article" date="2007" name="J. Proteome Res.">
        <title>Large-scale phosphorylation analysis of alpha-factor-arrested Saccharomyces cerevisiae.</title>
        <authorList>
            <person name="Li X."/>
            <person name="Gerber S.A."/>
            <person name="Rudner A.D."/>
            <person name="Beausoleil S.A."/>
            <person name="Haas W."/>
            <person name="Villen J."/>
            <person name="Elias J.E."/>
            <person name="Gygi S.P."/>
        </authorList>
    </citation>
    <scope>PHOSPHORYLATION [LARGE SCALE ANALYSIS] AT SER-45</scope>
    <scope>IDENTIFICATION BY MASS SPECTROMETRY [LARGE SCALE ANALYSIS]</scope>
    <source>
        <strain>ADR376</strain>
    </source>
</reference>
<reference key="12">
    <citation type="journal article" date="2007" name="Proc. Natl. Acad. Sci. U.S.A.">
        <title>Analysis of phosphorylation sites on proteins from Saccharomyces cerevisiae by electron transfer dissociation (ETD) mass spectrometry.</title>
        <authorList>
            <person name="Chi A."/>
            <person name="Huttenhower C."/>
            <person name="Geer L.Y."/>
            <person name="Coon J.J."/>
            <person name="Syka J.E.P."/>
            <person name="Bai D.L."/>
            <person name="Shabanowitz J."/>
            <person name="Burke D.J."/>
            <person name="Troyanskaya O.G."/>
            <person name="Hunt D.F."/>
        </authorList>
    </citation>
    <scope>IDENTIFICATION BY MASS SPECTROMETRY [LARGE SCALE ANALYSIS]</scope>
</reference>
<reference key="13">
    <citation type="journal article" date="2008" name="Cell">
        <title>The GET complex mediates insertion of tail-anchored proteins into the ER membrane.</title>
        <authorList>
            <person name="Schuldiner M."/>
            <person name="Metz J."/>
            <person name="Schmid V."/>
            <person name="Denic V."/>
            <person name="Rakwalska M."/>
            <person name="Schmitt H.D."/>
            <person name="Schwappach B."/>
            <person name="Weissman J.S."/>
        </authorList>
    </citation>
    <scope>FUNCTION</scope>
</reference>
<reference key="14">
    <citation type="journal article" date="2009" name="Science">
        <title>Global analysis of Cdk1 substrate phosphorylation sites provides insights into evolution.</title>
        <authorList>
            <person name="Holt L.J."/>
            <person name="Tuch B.B."/>
            <person name="Villen J."/>
            <person name="Johnson A.D."/>
            <person name="Gygi S.P."/>
            <person name="Morgan D.O."/>
        </authorList>
    </citation>
    <scope>IDENTIFICATION BY MASS SPECTROMETRY [LARGE SCALE ANALYSIS]</scope>
</reference>
<reference key="15">
    <citation type="journal article" date="2012" name="Proc. Natl. Acad. Sci. U.S.A.">
        <title>N-terminal acetylome analyses and functional insights of the N-terminal acetyltransferase NatB.</title>
        <authorList>
            <person name="Van Damme P."/>
            <person name="Lasa M."/>
            <person name="Polevoda B."/>
            <person name="Gazquez C."/>
            <person name="Elosegui-Artola A."/>
            <person name="Kim D.S."/>
            <person name="De Juan-Pardo E."/>
            <person name="Demeyer K."/>
            <person name="Hole K."/>
            <person name="Larrea E."/>
            <person name="Timmerman E."/>
            <person name="Prieto J."/>
            <person name="Arnesen T."/>
            <person name="Sherman F."/>
            <person name="Gevaert K."/>
            <person name="Aldabe R."/>
        </authorList>
    </citation>
    <scope>ACETYLATION [LARGE SCALE ANALYSIS] AT SER-2</scope>
    <scope>CLEAVAGE OF INITIATOR METHIONINE [LARGE SCALE ANALYSIS]</scope>
    <scope>IDENTIFICATION BY MASS SPECTROMETRY [LARGE SCALE ANALYSIS]</scope>
</reference>
<reference key="16">
    <citation type="journal article" date="2014" name="PLoS ONE">
        <title>WRB and CAML are necessary and sufficient to mediate tail-anchored protein targeting to the ER membrane.</title>
        <authorList>
            <person name="Vilardi F."/>
            <person name="Stephan M."/>
            <person name="Clancy A."/>
            <person name="Janshoff A."/>
            <person name="Schwappach B."/>
        </authorList>
    </citation>
    <scope>FUNCTION</scope>
</reference>
<reference key="17">
    <citation type="journal article" date="2011" name="Mol. Cell">
        <title>The mechanism of tail-anchored protein insertion into the ER membrane.</title>
        <authorList>
            <person name="Wang F."/>
            <person name="Whynot A."/>
            <person name="Tung M."/>
            <person name="Denic V."/>
        </authorList>
    </citation>
    <scope>X-RAY CRYSTALLOGRAPHY (2.1 ANGSTROMS) OF 1-38 IN COMPLEX WITH GET3</scope>
    <scope>FUNCTION</scope>
    <scope>SUBUNIT</scope>
    <scope>SUBCELLULAR LOCATION</scope>
    <scope>TOPOLOGY</scope>
</reference>
<reference key="18">
    <citation type="journal article" date="2011" name="Science">
        <title>Structural basis for tail-anchored membrane protein biogenesis by the Get3-receptor complex.</title>
        <authorList>
            <person name="Stefer S."/>
            <person name="Reitz S."/>
            <person name="Wang F."/>
            <person name="Wild K."/>
            <person name="Pang Y.Y."/>
            <person name="Schwarz D."/>
            <person name="Bomke J."/>
            <person name="Hein C."/>
            <person name="Lohr F."/>
            <person name="Bernhard F."/>
            <person name="Denic V."/>
            <person name="Dotsch V."/>
            <person name="Sinning I."/>
        </authorList>
    </citation>
    <scope>X-RAY CRYSTALLOGRAPHY (4.6 ANGSTROMS) OF 2-35 IN COMPLEX WITH GET3</scope>
    <scope>FUNCTION</scope>
    <scope>SUBUNIT</scope>
    <scope>SUBCELLULAR LOCATION</scope>
    <scope>TOPOLOGY</scope>
</reference>
<reference key="19">
    <citation type="journal article" date="2020" name="Mol. Cell">
        <title>Structural Basis of Tail-Anchored Membrane Protein Biogenesis by the GET Insertase Complex.</title>
        <authorList>
            <person name="McDowell M.A."/>
            <person name="Heimes M."/>
            <person name="Fiorentino F."/>
            <person name="Mehmood S."/>
            <person name="Farkas A."/>
            <person name="Coy-Vergara J."/>
            <person name="Wu D."/>
            <person name="Bolla J.R."/>
            <person name="Schmid V."/>
            <person name="Heinze R."/>
            <person name="Wild K."/>
            <person name="Flemming D."/>
            <person name="Pfeffer S."/>
            <person name="Schwappach B."/>
            <person name="Robinson C.V."/>
            <person name="Sinning I."/>
        </authorList>
    </citation>
    <scope>STRUCTURE BY ELECTRON MICROSCOPY (14 ANGSTROMS) OF THE GET COMPLEX</scope>
    <scope>MUTAGENESIS OF LYS-150 AND LYS-157</scope>
</reference>
<accession>P40056</accession>
<accession>D3DLZ0</accession>
<feature type="initiator methionine" description="Removed" evidence="15">
    <location>
        <position position="1"/>
    </location>
</feature>
<feature type="chain" id="PRO_0000097362" description="Golgi to ER traffic protein 2">
    <location>
        <begin position="2"/>
        <end position="285"/>
    </location>
</feature>
<feature type="topological domain" description="Cytoplasmic" evidence="1">
    <location>
        <begin position="2"/>
        <end position="148"/>
    </location>
</feature>
<feature type="transmembrane region" description="Helical" evidence="1">
    <location>
        <begin position="149"/>
        <end position="169"/>
    </location>
</feature>
<feature type="topological domain" description="Lumenal" evidence="1">
    <location>
        <begin position="170"/>
        <end position="196"/>
    </location>
</feature>
<feature type="transmembrane region" description="Helical" evidence="1">
    <location>
        <begin position="197"/>
        <end position="216"/>
    </location>
</feature>
<feature type="topological domain" description="Cytoplasmic" evidence="1">
    <location>
        <begin position="217"/>
        <end position="263"/>
    </location>
</feature>
<feature type="transmembrane region" description="Helical" evidence="1">
    <location>
        <begin position="264"/>
        <end position="284"/>
    </location>
</feature>
<feature type="topological domain" description="Lumenal" evidence="1">
    <location>
        <position position="285"/>
    </location>
</feature>
<feature type="region of interest" description="Disordered" evidence="2">
    <location>
        <begin position="1"/>
        <end position="72"/>
    </location>
</feature>
<feature type="region of interest" description="Disordered" evidence="2">
    <location>
        <begin position="87"/>
        <end position="106"/>
    </location>
</feature>
<feature type="compositionally biased region" description="Basic and acidic residues" evidence="2">
    <location>
        <begin position="1"/>
        <end position="10"/>
    </location>
</feature>
<feature type="compositionally biased region" description="Basic residues" evidence="2">
    <location>
        <begin position="11"/>
        <end position="20"/>
    </location>
</feature>
<feature type="compositionally biased region" description="Polar residues" evidence="2">
    <location>
        <begin position="24"/>
        <end position="42"/>
    </location>
</feature>
<feature type="compositionally biased region" description="Low complexity" evidence="2">
    <location>
        <begin position="49"/>
        <end position="60"/>
    </location>
</feature>
<feature type="compositionally biased region" description="Polar residues" evidence="2">
    <location>
        <begin position="93"/>
        <end position="104"/>
    </location>
</feature>
<feature type="modified residue" description="N-acetylserine" evidence="15">
    <location>
        <position position="2"/>
    </location>
</feature>
<feature type="modified residue" description="Phosphoserine" evidence="14">
    <location>
        <position position="45"/>
    </location>
</feature>
<feature type="glycosylation site" description="N-linked (GlcNAc...) asparagine" evidence="1">
    <location>
        <position position="173"/>
    </location>
</feature>
<feature type="glycosylation site" description="N-linked (GlcNAc...) asparagine" evidence="1">
    <location>
        <position position="196"/>
    </location>
</feature>
<feature type="mutagenesis site" description="Impaired tail-anchored protein insertion, impaired GET3 localization and loss of the GET1-GET2 heterotetramer; when associated with A-157." evidence="12">
    <original>K</original>
    <variation>A</variation>
    <location>
        <position position="150"/>
    </location>
</feature>
<feature type="mutagenesis site" description="Impaired tail-anchored protein insertion and impaired GET3 localization and loss of the GET1-GET2 heterotetramer; when associated with A-150." evidence="12">
    <original>K</original>
    <variation>A</variation>
    <location>
        <position position="157"/>
    </location>
</feature>
<feature type="helix" evidence="16">
    <location>
        <begin position="6"/>
        <end position="21"/>
    </location>
</feature>
<feature type="turn" evidence="16">
    <location>
        <begin position="22"/>
        <end position="24"/>
    </location>
</feature>
<feature type="helix" evidence="16">
    <location>
        <begin position="25"/>
        <end position="33"/>
    </location>
</feature>
<keyword id="KW-0002">3D-structure</keyword>
<keyword id="KW-0007">Acetylation</keyword>
<keyword id="KW-0256">Endoplasmic reticulum</keyword>
<keyword id="KW-0931">ER-Golgi transport</keyword>
<keyword id="KW-0325">Glycoprotein</keyword>
<keyword id="KW-0333">Golgi apparatus</keyword>
<keyword id="KW-0472">Membrane</keyword>
<keyword id="KW-0597">Phosphoprotein</keyword>
<keyword id="KW-1185">Reference proteome</keyword>
<keyword id="KW-0812">Transmembrane</keyword>
<keyword id="KW-1133">Transmembrane helix</keyword>
<keyword id="KW-0813">Transport</keyword>
<organism>
    <name type="scientific">Saccharomyces cerevisiae (strain ATCC 204508 / S288c)</name>
    <name type="common">Baker's yeast</name>
    <dbReference type="NCBI Taxonomy" id="559292"/>
    <lineage>
        <taxon>Eukaryota</taxon>
        <taxon>Fungi</taxon>
        <taxon>Dikarya</taxon>
        <taxon>Ascomycota</taxon>
        <taxon>Saccharomycotina</taxon>
        <taxon>Saccharomycetes</taxon>
        <taxon>Saccharomycetales</taxon>
        <taxon>Saccharomycetaceae</taxon>
        <taxon>Saccharomyces</taxon>
    </lineage>
</organism>
<sequence>MSELTEAEKRRLLRERRQKKFSNGGASSRLNKITGQASSHLNAESPLDAPSAAKTTPPASVHSATPDIKEDSNVAPQLDLLKQLAAMQGQGTGKSTPQDSSTPDLLSLLSSMNTGMPSAEGTPSFGQAAPAAPINQAALDYHDYLLNRLKAWTILVKWVFFLLPYLYLITRPNSSVWPAYAFTQSAWFAPLRNPSNFTRIFATFEFLSISIYYQLLKNVEHKSKIKNLQDTNKLVKLVSLVPEGVIPVANLKGKLITLLQYWDLLSMLITDISFVLIVLGLLTYL</sequence>
<gene>
    <name evidence="1" type="primary">GET2</name>
    <name evidence="1" type="synonym">HUR2</name>
    <name evidence="1" type="synonym">RMD7</name>
    <name type="ordered locus">YER083C</name>
</gene>
<evidence type="ECO:0000255" key="1">
    <source>
        <dbReference type="HAMAP-Rule" id="MF_03114"/>
    </source>
</evidence>
<evidence type="ECO:0000256" key="2">
    <source>
        <dbReference type="SAM" id="MobiDB-lite"/>
    </source>
</evidence>
<evidence type="ECO:0000269" key="3">
    <source>
    </source>
</evidence>
<evidence type="ECO:0000269" key="4">
    <source>
    </source>
</evidence>
<evidence type="ECO:0000269" key="5">
    <source>
    </source>
</evidence>
<evidence type="ECO:0000269" key="6">
    <source>
    </source>
</evidence>
<evidence type="ECO:0000269" key="7">
    <source>
    </source>
</evidence>
<evidence type="ECO:0000269" key="8">
    <source>
    </source>
</evidence>
<evidence type="ECO:0000269" key="9">
    <source>
    </source>
</evidence>
<evidence type="ECO:0000269" key="10">
    <source>
    </source>
</evidence>
<evidence type="ECO:0000269" key="11">
    <source>
    </source>
</evidence>
<evidence type="ECO:0000269" key="12">
    <source>
    </source>
</evidence>
<evidence type="ECO:0000305" key="13"/>
<evidence type="ECO:0007744" key="14">
    <source>
    </source>
</evidence>
<evidence type="ECO:0007744" key="15">
    <source>
    </source>
</evidence>
<evidence type="ECO:0007829" key="16">
    <source>
        <dbReference type="PDB" id="3ZS9"/>
    </source>
</evidence>
<dbReference type="EMBL" id="U18839">
    <property type="protein sequence ID" value="AAB64638.1"/>
    <property type="status" value="ALT_INIT"/>
    <property type="molecule type" value="Genomic_DNA"/>
</dbReference>
<dbReference type="EMBL" id="BK006939">
    <property type="protein sequence ID" value="DAA07744.1"/>
    <property type="molecule type" value="Genomic_DNA"/>
</dbReference>
<dbReference type="PIR" id="S50586">
    <property type="entry name" value="S50586"/>
</dbReference>
<dbReference type="RefSeq" id="NP_011006.2">
    <property type="nucleotide sequence ID" value="NM_001178974.1"/>
</dbReference>
<dbReference type="PDB" id="3SJD">
    <property type="method" value="X-ray"/>
    <property type="resolution" value="4.60 A"/>
    <property type="chains" value="D/E=2-35"/>
</dbReference>
<dbReference type="PDB" id="3ZS9">
    <property type="method" value="X-ray"/>
    <property type="resolution" value="2.10 A"/>
    <property type="chains" value="C/D=1-38"/>
</dbReference>
<dbReference type="PDBsum" id="3SJD"/>
<dbReference type="PDBsum" id="3ZS9"/>
<dbReference type="SMR" id="P40056"/>
<dbReference type="BioGRID" id="36828">
    <property type="interactions" value="1083"/>
</dbReference>
<dbReference type="ComplexPortal" id="CPX-956">
    <property type="entry name" value="GET complex"/>
</dbReference>
<dbReference type="DIP" id="DIP-4508N"/>
<dbReference type="FunCoup" id="P40056">
    <property type="interactions" value="82"/>
</dbReference>
<dbReference type="IntAct" id="P40056">
    <property type="interactions" value="10"/>
</dbReference>
<dbReference type="MINT" id="P40056"/>
<dbReference type="STRING" id="4932.YER083C"/>
<dbReference type="TCDB" id="3.A.21.1.1">
    <property type="family name" value="the c-terminal tail-anchored membrane protein biogenesis/ insertion complex (tamp-b) family"/>
</dbReference>
<dbReference type="GlyCosmos" id="P40056">
    <property type="glycosylation" value="2 sites, No reported glycans"/>
</dbReference>
<dbReference type="GlyGen" id="P40056">
    <property type="glycosylation" value="3 sites"/>
</dbReference>
<dbReference type="iPTMnet" id="P40056"/>
<dbReference type="PaxDb" id="4932-YER083C"/>
<dbReference type="PeptideAtlas" id="P40056"/>
<dbReference type="TopDownProteomics" id="P40056"/>
<dbReference type="EnsemblFungi" id="YER083C_mRNA">
    <property type="protein sequence ID" value="YER083C"/>
    <property type="gene ID" value="YER083C"/>
</dbReference>
<dbReference type="GeneID" id="856817"/>
<dbReference type="KEGG" id="sce:YER083C"/>
<dbReference type="AGR" id="SGD:S000000885"/>
<dbReference type="SGD" id="S000000885">
    <property type="gene designation" value="GET2"/>
</dbReference>
<dbReference type="VEuPathDB" id="FungiDB:YER083C"/>
<dbReference type="eggNOG" id="ENOG502QW0H">
    <property type="taxonomic scope" value="Eukaryota"/>
</dbReference>
<dbReference type="HOGENOM" id="CLU_066477_0_0_1"/>
<dbReference type="InParanoid" id="P40056"/>
<dbReference type="OMA" id="QYWDVLS"/>
<dbReference type="OrthoDB" id="4097053at2759"/>
<dbReference type="BioCyc" id="YEAST:G3O-30253-MONOMER"/>
<dbReference type="BioGRID-ORCS" id="856817">
    <property type="hits" value="10 hits in 10 CRISPR screens"/>
</dbReference>
<dbReference type="PRO" id="PR:P40056"/>
<dbReference type="Proteomes" id="UP000002311">
    <property type="component" value="Chromosome V"/>
</dbReference>
<dbReference type="RNAct" id="P40056">
    <property type="molecule type" value="protein"/>
</dbReference>
<dbReference type="GO" id="GO:0005783">
    <property type="term" value="C:endoplasmic reticulum"/>
    <property type="evidence" value="ECO:0007005"/>
    <property type="project" value="SGD"/>
</dbReference>
<dbReference type="GO" id="GO:0005789">
    <property type="term" value="C:endoplasmic reticulum membrane"/>
    <property type="evidence" value="ECO:0000314"/>
    <property type="project" value="SGD"/>
</dbReference>
<dbReference type="GO" id="GO:0043529">
    <property type="term" value="C:GET complex"/>
    <property type="evidence" value="ECO:0000314"/>
    <property type="project" value="UniProtKB"/>
</dbReference>
<dbReference type="GO" id="GO:0000139">
    <property type="term" value="C:Golgi membrane"/>
    <property type="evidence" value="ECO:0007669"/>
    <property type="project" value="UniProtKB-SubCell"/>
</dbReference>
<dbReference type="GO" id="GO:0008320">
    <property type="term" value="F:protein transmembrane transporter activity"/>
    <property type="evidence" value="ECO:0000314"/>
    <property type="project" value="SGD"/>
</dbReference>
<dbReference type="GO" id="GO:0043495">
    <property type="term" value="F:protein-membrane adaptor activity"/>
    <property type="evidence" value="ECO:0000316"/>
    <property type="project" value="SGD"/>
</dbReference>
<dbReference type="GO" id="GO:0097051">
    <property type="term" value="P:establishment of protein localization to endoplasmic reticulum membrane"/>
    <property type="evidence" value="ECO:0000314"/>
    <property type="project" value="SGD"/>
</dbReference>
<dbReference type="GO" id="GO:0000423">
    <property type="term" value="P:mitophagy"/>
    <property type="evidence" value="ECO:0000315"/>
    <property type="project" value="SGD"/>
</dbReference>
<dbReference type="GO" id="GO:0045048">
    <property type="term" value="P:protein insertion into ER membrane"/>
    <property type="evidence" value="ECO:0000314"/>
    <property type="project" value="ComplexPortal"/>
</dbReference>
<dbReference type="GO" id="GO:0006890">
    <property type="term" value="P:retrograde vesicle-mediated transport, Golgi to endoplasmic reticulum"/>
    <property type="evidence" value="ECO:0000314"/>
    <property type="project" value="SGD"/>
</dbReference>
<dbReference type="GO" id="GO:0071816">
    <property type="term" value="P:tail-anchored membrane protein insertion into ER membrane"/>
    <property type="evidence" value="ECO:0000316"/>
    <property type="project" value="SGD"/>
</dbReference>
<dbReference type="HAMAP" id="MF_03114">
    <property type="entry name" value="Get2"/>
    <property type="match status" value="1"/>
</dbReference>
<dbReference type="InterPro" id="IPR014802">
    <property type="entry name" value="GET2"/>
</dbReference>
<dbReference type="InterPro" id="IPR028143">
    <property type="entry name" value="Get2/sif1"/>
</dbReference>
<dbReference type="PANTHER" id="PTHR28263">
    <property type="entry name" value="GOLGI TO ER TRAFFIC PROTEIN 2"/>
    <property type="match status" value="1"/>
</dbReference>
<dbReference type="PANTHER" id="PTHR28263:SF1">
    <property type="entry name" value="GOLGI TO ER TRAFFIC PROTEIN 2"/>
    <property type="match status" value="1"/>
</dbReference>
<dbReference type="Pfam" id="PF08690">
    <property type="entry name" value="GET2"/>
    <property type="match status" value="1"/>
</dbReference>
<name>GET2_YEAST</name>
<comment type="function">
    <text evidence="1 3 5 6 7 8 9 10 11">Required for the post-translational delivery of tail-anchored (TA) proteins to the endoplasmic reticulum. Together with GET1, acts as a membrane receptor for soluble GET3, which recognizes and selectively binds the transmembrane domain of TA proteins in the cytosol. The GET complex cooperates with the HDEL receptor ERD2 to mediate the ATP-dependent retrieval of resident ER proteins that contain a C-terminal H-D-E-L retention signal from the Golgi to the ER. Involved in DNA replication and DNA damage response and also in cell wall function.</text>
</comment>
<comment type="subunit">
    <text evidence="1 4 7 9 10 12">Component of the Golgi to ER traffic (GET) complex, which is composed of GET1, GET2 and GET3. Within the complex, GET1 and GET2 form a heterotetramer which is stabilized by phosphatidylinositol binding and which binds to the GET3 homodimer (PubMed:32910895).</text>
</comment>
<comment type="interaction">
    <interactant intactId="EBI-22604">
        <id>P40056</id>
    </interactant>
    <interactant intactId="EBI-23722">
        <id>P53192</id>
        <label>GET1</label>
    </interactant>
    <organismsDiffer>false</organismsDiffer>
    <experiments>4</experiments>
</comment>
<comment type="interaction">
    <interactant intactId="EBI-22604">
        <id>P40056</id>
    </interactant>
    <interactant intactId="EBI-2989">
        <id>Q12154</id>
        <label>GET3</label>
    </interactant>
    <organismsDiffer>false</organismsDiffer>
    <experiments>10</experiments>
</comment>
<comment type="subcellular location">
    <subcellularLocation>
        <location>Endoplasmic reticulum membrane</location>
        <topology>Multi-pass membrane protein</topology>
    </subcellularLocation>
    <subcellularLocation>
        <location>Golgi apparatus membrane</location>
        <topology>Multi-pass membrane protein</topology>
    </subcellularLocation>
</comment>
<comment type="similarity">
    <text evidence="1">Belongs to the GET2 family.</text>
</comment>
<comment type="sequence caution" evidence="13">
    <conflict type="erroneous initiation">
        <sequence resource="EMBL-CDS" id="AAB64638"/>
    </conflict>
</comment>